<accession>P48069</accession>
<comment type="function">
    <text evidence="1">RuBisCO catalyzes two reactions: the carboxylation of D-ribulose 1,5-bisphosphate, the primary event in carbon dioxide fixation, as well as the oxidative fragmentation of the pentose substrate in the photorespiration process. Both reactions occur simultaneously and in competition at the same active site.</text>
</comment>
<comment type="catalytic activity">
    <reaction evidence="1">
        <text>2 (2R)-3-phosphoglycerate + 2 H(+) = D-ribulose 1,5-bisphosphate + CO2 + H2O</text>
        <dbReference type="Rhea" id="RHEA:23124"/>
        <dbReference type="ChEBI" id="CHEBI:15377"/>
        <dbReference type="ChEBI" id="CHEBI:15378"/>
        <dbReference type="ChEBI" id="CHEBI:16526"/>
        <dbReference type="ChEBI" id="CHEBI:57870"/>
        <dbReference type="ChEBI" id="CHEBI:58272"/>
        <dbReference type="EC" id="4.1.1.39"/>
    </reaction>
</comment>
<comment type="catalytic activity">
    <reaction evidence="1">
        <text>D-ribulose 1,5-bisphosphate + O2 = 2-phosphoglycolate + (2R)-3-phosphoglycerate + 2 H(+)</text>
        <dbReference type="Rhea" id="RHEA:36631"/>
        <dbReference type="ChEBI" id="CHEBI:15378"/>
        <dbReference type="ChEBI" id="CHEBI:15379"/>
        <dbReference type="ChEBI" id="CHEBI:57870"/>
        <dbReference type="ChEBI" id="CHEBI:58033"/>
        <dbReference type="ChEBI" id="CHEBI:58272"/>
    </reaction>
</comment>
<comment type="cofactor">
    <cofactor evidence="1">
        <name>Mg(2+)</name>
        <dbReference type="ChEBI" id="CHEBI:18420"/>
    </cofactor>
    <text evidence="1">Binds 1 Mg(2+) ion per subunit.</text>
</comment>
<comment type="subunit">
    <text evidence="1">Heterohexadecamer of 8 large chains and 8 small chains; disulfide-linked. The disulfide link is formed within the large subunit homodimers.</text>
</comment>
<comment type="subcellular location">
    <subcellularLocation>
        <location>Plastid</location>
        <location>Chloroplast</location>
    </subcellularLocation>
</comment>
<comment type="PTM">
    <text evidence="1">The disulfide bond which can form in the large chain dimeric partners within the hexadecamer appears to be associated with oxidative stress and protein turnover.</text>
</comment>
<comment type="miscellaneous">
    <text evidence="1">The basic functional RuBisCO is composed of a large chain homodimer in a 'head-to-tail' conformation. In form I RuBisCO this homodimer is arranged in a barrel-like tetramer with the small subunits forming a tetrameric 'cap' on each end of the 'barrel'.</text>
</comment>
<comment type="similarity">
    <text evidence="1">Belongs to the RuBisCO large chain family. Type I subfamily.</text>
</comment>
<dbReference type="EC" id="4.1.1.39" evidence="1"/>
<dbReference type="EMBL" id="U21004">
    <property type="protein sequence ID" value="AAA91977.1"/>
    <property type="molecule type" value="mRNA"/>
</dbReference>
<dbReference type="PIR" id="S66166">
    <property type="entry name" value="S66166"/>
</dbReference>
<dbReference type="SMR" id="P48069"/>
<dbReference type="GO" id="GO:0009507">
    <property type="term" value="C:chloroplast"/>
    <property type="evidence" value="ECO:0007669"/>
    <property type="project" value="UniProtKB-SubCell"/>
</dbReference>
<dbReference type="GO" id="GO:0000287">
    <property type="term" value="F:magnesium ion binding"/>
    <property type="evidence" value="ECO:0007669"/>
    <property type="project" value="InterPro"/>
</dbReference>
<dbReference type="GO" id="GO:0004497">
    <property type="term" value="F:monooxygenase activity"/>
    <property type="evidence" value="ECO:0007669"/>
    <property type="project" value="UniProtKB-KW"/>
</dbReference>
<dbReference type="GO" id="GO:0016984">
    <property type="term" value="F:ribulose-bisphosphate carboxylase activity"/>
    <property type="evidence" value="ECO:0007669"/>
    <property type="project" value="UniProtKB-EC"/>
</dbReference>
<dbReference type="GO" id="GO:0009853">
    <property type="term" value="P:photorespiration"/>
    <property type="evidence" value="ECO:0007669"/>
    <property type="project" value="UniProtKB-KW"/>
</dbReference>
<dbReference type="GO" id="GO:0019253">
    <property type="term" value="P:reductive pentose-phosphate cycle"/>
    <property type="evidence" value="ECO:0007669"/>
    <property type="project" value="UniProtKB-KW"/>
</dbReference>
<dbReference type="CDD" id="cd08212">
    <property type="entry name" value="RuBisCO_large_I"/>
    <property type="match status" value="1"/>
</dbReference>
<dbReference type="Gene3D" id="3.20.20.110">
    <property type="entry name" value="Ribulose bisphosphate carboxylase, large subunit, C-terminal domain"/>
    <property type="match status" value="1"/>
</dbReference>
<dbReference type="Gene3D" id="3.30.70.150">
    <property type="entry name" value="RuBisCO large subunit, N-terminal domain"/>
    <property type="match status" value="1"/>
</dbReference>
<dbReference type="HAMAP" id="MF_01338">
    <property type="entry name" value="RuBisCO_L_type1"/>
    <property type="match status" value="1"/>
</dbReference>
<dbReference type="InterPro" id="IPR033966">
    <property type="entry name" value="RuBisCO"/>
</dbReference>
<dbReference type="InterPro" id="IPR020878">
    <property type="entry name" value="RuBisCo_large_chain_AS"/>
</dbReference>
<dbReference type="InterPro" id="IPR000685">
    <property type="entry name" value="RuBisCO_lsu_C"/>
</dbReference>
<dbReference type="InterPro" id="IPR036376">
    <property type="entry name" value="RuBisCO_lsu_C_sf"/>
</dbReference>
<dbReference type="InterPro" id="IPR017443">
    <property type="entry name" value="RuBisCO_lsu_fd_N"/>
</dbReference>
<dbReference type="InterPro" id="IPR036422">
    <property type="entry name" value="RuBisCO_lsu_N_sf"/>
</dbReference>
<dbReference type="InterPro" id="IPR020888">
    <property type="entry name" value="RuBisCO_lsuI"/>
</dbReference>
<dbReference type="NCBIfam" id="NF003252">
    <property type="entry name" value="PRK04208.1"/>
    <property type="match status" value="1"/>
</dbReference>
<dbReference type="PANTHER" id="PTHR42704">
    <property type="entry name" value="RIBULOSE BISPHOSPHATE CARBOXYLASE"/>
    <property type="match status" value="1"/>
</dbReference>
<dbReference type="PANTHER" id="PTHR42704:SF17">
    <property type="entry name" value="RIBULOSE BISPHOSPHATE CARBOXYLASE LARGE CHAIN"/>
    <property type="match status" value="1"/>
</dbReference>
<dbReference type="Pfam" id="PF00016">
    <property type="entry name" value="RuBisCO_large"/>
    <property type="match status" value="1"/>
</dbReference>
<dbReference type="Pfam" id="PF02788">
    <property type="entry name" value="RuBisCO_large_N"/>
    <property type="match status" value="1"/>
</dbReference>
<dbReference type="SFLD" id="SFLDG01052">
    <property type="entry name" value="RuBisCO"/>
    <property type="match status" value="1"/>
</dbReference>
<dbReference type="SFLD" id="SFLDS00014">
    <property type="entry name" value="RuBisCO"/>
    <property type="match status" value="1"/>
</dbReference>
<dbReference type="SFLD" id="SFLDG00301">
    <property type="entry name" value="RuBisCO-like_proteins"/>
    <property type="match status" value="1"/>
</dbReference>
<dbReference type="SUPFAM" id="SSF51649">
    <property type="entry name" value="RuBisCo, C-terminal domain"/>
    <property type="match status" value="1"/>
</dbReference>
<dbReference type="SUPFAM" id="SSF54966">
    <property type="entry name" value="RuBisCO, large subunit, small (N-terminal) domain"/>
    <property type="match status" value="1"/>
</dbReference>
<dbReference type="PROSITE" id="PS00157">
    <property type="entry name" value="RUBISCO_LARGE"/>
    <property type="match status" value="1"/>
</dbReference>
<reference key="1">
    <citation type="journal article" date="1995" name="Nucleic Acids Res.">
        <title>Evidence for the late origin of introns in chloroplast genes from an evolutionary analysis of the genus Euglena.</title>
        <authorList>
            <person name="Thompson M.D."/>
            <person name="Copertino D.W."/>
            <person name="Thompson E."/>
            <person name="Favreau M.R."/>
            <person name="Hallick R.B."/>
        </authorList>
    </citation>
    <scope>NUCLEOTIDE SEQUENCE [MRNA]</scope>
    <source>
        <strain>UTEX 373</strain>
    </source>
</reference>
<gene>
    <name evidence="1" type="primary">rbcL</name>
</gene>
<geneLocation type="chloroplast"/>
<organism>
    <name type="scientific">Euglena anabaena</name>
    <name type="common">Euglenaria anabaena</name>
    <dbReference type="NCBI Taxonomy" id="38273"/>
    <lineage>
        <taxon>Eukaryota</taxon>
        <taxon>Discoba</taxon>
        <taxon>Euglenozoa</taxon>
        <taxon>Euglenida</taxon>
        <taxon>Spirocuta</taxon>
        <taxon>Euglenophyceae</taxon>
        <taxon>Euglenales</taxon>
        <taxon>Euglenaceae</taxon>
        <taxon>Euglenaria</taxon>
    </lineage>
</organism>
<feature type="chain" id="PRO_0000062465" description="Ribulose bisphosphate carboxylase large chain">
    <location>
        <begin position="1" status="less than"/>
        <end position="436" status="greater than"/>
    </location>
</feature>
<feature type="active site" description="Proton acceptor" evidence="1">
    <location>
        <position position="156"/>
    </location>
</feature>
<feature type="active site" description="Proton acceptor" evidence="1">
    <location>
        <position position="275"/>
    </location>
</feature>
<feature type="binding site" description="in homodimeric partner" evidence="1">
    <location>
        <position position="104"/>
    </location>
    <ligand>
        <name>substrate</name>
    </ligand>
</feature>
<feature type="binding site" evidence="1">
    <location>
        <position position="154"/>
    </location>
    <ligand>
        <name>substrate</name>
    </ligand>
</feature>
<feature type="binding site" evidence="1">
    <location>
        <position position="158"/>
    </location>
    <ligand>
        <name>substrate</name>
    </ligand>
</feature>
<feature type="binding site" description="via carbamate group" evidence="1">
    <location>
        <position position="182"/>
    </location>
    <ligand>
        <name>Mg(2+)</name>
        <dbReference type="ChEBI" id="CHEBI:18420"/>
    </ligand>
</feature>
<feature type="binding site" evidence="1">
    <location>
        <position position="184"/>
    </location>
    <ligand>
        <name>Mg(2+)</name>
        <dbReference type="ChEBI" id="CHEBI:18420"/>
    </ligand>
</feature>
<feature type="binding site" evidence="1">
    <location>
        <position position="185"/>
    </location>
    <ligand>
        <name>Mg(2+)</name>
        <dbReference type="ChEBI" id="CHEBI:18420"/>
    </ligand>
</feature>
<feature type="binding site" evidence="1">
    <location>
        <position position="276"/>
    </location>
    <ligand>
        <name>substrate</name>
    </ligand>
</feature>
<feature type="binding site" evidence="1">
    <location>
        <position position="308"/>
    </location>
    <ligand>
        <name>substrate</name>
    </ligand>
</feature>
<feature type="binding site" evidence="1">
    <location>
        <position position="360"/>
    </location>
    <ligand>
        <name>substrate</name>
    </ligand>
</feature>
<feature type="site" description="Transition state stabilizer" evidence="1">
    <location>
        <position position="315"/>
    </location>
</feature>
<feature type="modified residue" description="N6-carboxylysine" evidence="1">
    <location>
        <position position="182"/>
    </location>
</feature>
<feature type="disulfide bond" description="Interchain; in linked form" evidence="1">
    <location>
        <position position="228"/>
    </location>
</feature>
<feature type="non-terminal residue">
    <location>
        <position position="1"/>
    </location>
</feature>
<feature type="non-terminal residue">
    <location>
        <position position="436"/>
    </location>
</feature>
<name>RBL_EUGAN</name>
<protein>
    <recommendedName>
        <fullName evidence="1">Ribulose bisphosphate carboxylase large chain</fullName>
        <shortName evidence="1">RuBisCO large subunit</shortName>
        <ecNumber evidence="1">4.1.1.39</ecNumber>
    </recommendedName>
</protein>
<sequence>YRLTYYTPDYQVAETDILAAFRMTPQPGVPAEECGAAVAAESSTGTWTTVWTDGLTQLDKYKGRCYDLEPVPGENNQYIAYVAYPIDLFEEGSVTNLLTSIVGNVFGFKALRALRLEDLRIPPAYVKTFWGPPHGIQVERDKLNKYGRPLLGCTIKPKLGLSAKNYGRAVYECLRGGLDFTKDDENVNSQSFMRWRDRFLFCAEAIYKAQSETGEIKGHYLNATAGTCEEMYKRANYAAQIGVPIVMHDYLTGGFTANTSLAMFCRDNGLLLHIHRAMHAVIDRQRNHGIHFRVLAKTLRMSGGDHLHSGTVVGKLEGEREVTLGFVDLMRDPYVEKDRSRGIYFTQDWVGLGGTIPVASGGIHVWHMPALTEIFGDDACLQFGGGTLGHPWGNAPGAAANRVASEACVQARNEGRDLSREGGDVIREACKWSPEL</sequence>
<keyword id="KW-0113">Calvin cycle</keyword>
<keyword id="KW-0120">Carbon dioxide fixation</keyword>
<keyword id="KW-0150">Chloroplast</keyword>
<keyword id="KW-1015">Disulfide bond</keyword>
<keyword id="KW-0456">Lyase</keyword>
<keyword id="KW-0460">Magnesium</keyword>
<keyword id="KW-0479">Metal-binding</keyword>
<keyword id="KW-0503">Monooxygenase</keyword>
<keyword id="KW-0560">Oxidoreductase</keyword>
<keyword id="KW-0601">Photorespiration</keyword>
<keyword id="KW-0602">Photosynthesis</keyword>
<keyword id="KW-0934">Plastid</keyword>
<evidence type="ECO:0000255" key="1">
    <source>
        <dbReference type="HAMAP-Rule" id="MF_01338"/>
    </source>
</evidence>
<proteinExistence type="evidence at transcript level"/>